<keyword id="KW-0030">Aminoacyl-tRNA synthetase</keyword>
<keyword id="KW-0067">ATP-binding</keyword>
<keyword id="KW-0963">Cytoplasm</keyword>
<keyword id="KW-0436">Ligase</keyword>
<keyword id="KW-0547">Nucleotide-binding</keyword>
<keyword id="KW-0648">Protein biosynthesis</keyword>
<keyword id="KW-1185">Reference proteome</keyword>
<comment type="catalytic activity">
    <reaction evidence="1">
        <text>tRNA(Asn) + L-asparagine + ATP = L-asparaginyl-tRNA(Asn) + AMP + diphosphate + H(+)</text>
        <dbReference type="Rhea" id="RHEA:11180"/>
        <dbReference type="Rhea" id="RHEA-COMP:9659"/>
        <dbReference type="Rhea" id="RHEA-COMP:9674"/>
        <dbReference type="ChEBI" id="CHEBI:15378"/>
        <dbReference type="ChEBI" id="CHEBI:30616"/>
        <dbReference type="ChEBI" id="CHEBI:33019"/>
        <dbReference type="ChEBI" id="CHEBI:58048"/>
        <dbReference type="ChEBI" id="CHEBI:78442"/>
        <dbReference type="ChEBI" id="CHEBI:78515"/>
        <dbReference type="ChEBI" id="CHEBI:456215"/>
        <dbReference type="EC" id="6.1.1.22"/>
    </reaction>
</comment>
<comment type="subunit">
    <text evidence="1">Homodimer.</text>
</comment>
<comment type="subcellular location">
    <subcellularLocation>
        <location evidence="1">Cytoplasm</location>
    </subcellularLocation>
</comment>
<comment type="similarity">
    <text evidence="1">Belongs to the class-II aminoacyl-tRNA synthetase family.</text>
</comment>
<proteinExistence type="inferred from homology"/>
<feature type="chain" id="PRO_1000081856" description="Asparagine--tRNA ligase">
    <location>
        <begin position="1"/>
        <end position="466"/>
    </location>
</feature>
<name>SYN_SHEPA</name>
<gene>
    <name evidence="1" type="primary">asnS</name>
    <name type="ordered locus">Spea_2034</name>
</gene>
<dbReference type="EC" id="6.1.1.22" evidence="1"/>
<dbReference type="EMBL" id="CP000851">
    <property type="protein sequence ID" value="ABV87354.1"/>
    <property type="molecule type" value="Genomic_DNA"/>
</dbReference>
<dbReference type="RefSeq" id="WP_012155270.1">
    <property type="nucleotide sequence ID" value="NC_009901.1"/>
</dbReference>
<dbReference type="SMR" id="A8H467"/>
<dbReference type="STRING" id="398579.Spea_2034"/>
<dbReference type="KEGG" id="spl:Spea_2034"/>
<dbReference type="eggNOG" id="COG0017">
    <property type="taxonomic scope" value="Bacteria"/>
</dbReference>
<dbReference type="HOGENOM" id="CLU_004553_2_0_6"/>
<dbReference type="OrthoDB" id="9762036at2"/>
<dbReference type="Proteomes" id="UP000002608">
    <property type="component" value="Chromosome"/>
</dbReference>
<dbReference type="GO" id="GO:0005737">
    <property type="term" value="C:cytoplasm"/>
    <property type="evidence" value="ECO:0007669"/>
    <property type="project" value="UniProtKB-SubCell"/>
</dbReference>
<dbReference type="GO" id="GO:0004816">
    <property type="term" value="F:asparagine-tRNA ligase activity"/>
    <property type="evidence" value="ECO:0007669"/>
    <property type="project" value="UniProtKB-UniRule"/>
</dbReference>
<dbReference type="GO" id="GO:0005524">
    <property type="term" value="F:ATP binding"/>
    <property type="evidence" value="ECO:0007669"/>
    <property type="project" value="UniProtKB-UniRule"/>
</dbReference>
<dbReference type="GO" id="GO:0003676">
    <property type="term" value="F:nucleic acid binding"/>
    <property type="evidence" value="ECO:0007669"/>
    <property type="project" value="InterPro"/>
</dbReference>
<dbReference type="GO" id="GO:0006421">
    <property type="term" value="P:asparaginyl-tRNA aminoacylation"/>
    <property type="evidence" value="ECO:0007669"/>
    <property type="project" value="UniProtKB-UniRule"/>
</dbReference>
<dbReference type="CDD" id="cd00776">
    <property type="entry name" value="AsxRS_core"/>
    <property type="match status" value="1"/>
</dbReference>
<dbReference type="CDD" id="cd04318">
    <property type="entry name" value="EcAsnRS_like_N"/>
    <property type="match status" value="1"/>
</dbReference>
<dbReference type="FunFam" id="3.30.930.10:FF:000016">
    <property type="entry name" value="Asparagine--tRNA ligase"/>
    <property type="match status" value="1"/>
</dbReference>
<dbReference type="Gene3D" id="3.30.930.10">
    <property type="entry name" value="Bira Bifunctional Protein, Domain 2"/>
    <property type="match status" value="1"/>
</dbReference>
<dbReference type="Gene3D" id="2.40.50.140">
    <property type="entry name" value="Nucleic acid-binding proteins"/>
    <property type="match status" value="1"/>
</dbReference>
<dbReference type="HAMAP" id="MF_00534">
    <property type="entry name" value="Asn_tRNA_synth"/>
    <property type="match status" value="1"/>
</dbReference>
<dbReference type="InterPro" id="IPR004364">
    <property type="entry name" value="Aa-tRNA-synt_II"/>
</dbReference>
<dbReference type="InterPro" id="IPR006195">
    <property type="entry name" value="aa-tRNA-synth_II"/>
</dbReference>
<dbReference type="InterPro" id="IPR045864">
    <property type="entry name" value="aa-tRNA-synth_II/BPL/LPL"/>
</dbReference>
<dbReference type="InterPro" id="IPR004522">
    <property type="entry name" value="Asn-tRNA-ligase"/>
</dbReference>
<dbReference type="InterPro" id="IPR002312">
    <property type="entry name" value="Asp/Asn-tRNA-synth_IIb"/>
</dbReference>
<dbReference type="InterPro" id="IPR012340">
    <property type="entry name" value="NA-bd_OB-fold"/>
</dbReference>
<dbReference type="InterPro" id="IPR004365">
    <property type="entry name" value="NA-bd_OB_tRNA"/>
</dbReference>
<dbReference type="NCBIfam" id="TIGR00457">
    <property type="entry name" value="asnS"/>
    <property type="match status" value="1"/>
</dbReference>
<dbReference type="NCBIfam" id="NF003037">
    <property type="entry name" value="PRK03932.1"/>
    <property type="match status" value="1"/>
</dbReference>
<dbReference type="PANTHER" id="PTHR22594:SF34">
    <property type="entry name" value="ASPARAGINE--TRNA LIGASE, MITOCHONDRIAL-RELATED"/>
    <property type="match status" value="1"/>
</dbReference>
<dbReference type="PANTHER" id="PTHR22594">
    <property type="entry name" value="ASPARTYL/LYSYL-TRNA SYNTHETASE"/>
    <property type="match status" value="1"/>
</dbReference>
<dbReference type="Pfam" id="PF00152">
    <property type="entry name" value="tRNA-synt_2"/>
    <property type="match status" value="1"/>
</dbReference>
<dbReference type="Pfam" id="PF01336">
    <property type="entry name" value="tRNA_anti-codon"/>
    <property type="match status" value="1"/>
</dbReference>
<dbReference type="PRINTS" id="PR01042">
    <property type="entry name" value="TRNASYNTHASP"/>
</dbReference>
<dbReference type="SUPFAM" id="SSF55681">
    <property type="entry name" value="Class II aaRS and biotin synthetases"/>
    <property type="match status" value="1"/>
</dbReference>
<dbReference type="SUPFAM" id="SSF50249">
    <property type="entry name" value="Nucleic acid-binding proteins"/>
    <property type="match status" value="1"/>
</dbReference>
<dbReference type="PROSITE" id="PS50862">
    <property type="entry name" value="AA_TRNA_LIGASE_II"/>
    <property type="match status" value="1"/>
</dbReference>
<reference key="1">
    <citation type="submission" date="2007-10" db="EMBL/GenBank/DDBJ databases">
        <title>Complete sequence of Shewanella pealeana ATCC 700345.</title>
        <authorList>
            <consortium name="US DOE Joint Genome Institute"/>
            <person name="Copeland A."/>
            <person name="Lucas S."/>
            <person name="Lapidus A."/>
            <person name="Barry K."/>
            <person name="Glavina del Rio T."/>
            <person name="Dalin E."/>
            <person name="Tice H."/>
            <person name="Pitluck S."/>
            <person name="Chertkov O."/>
            <person name="Brettin T."/>
            <person name="Bruce D."/>
            <person name="Detter J.C."/>
            <person name="Han C."/>
            <person name="Schmutz J."/>
            <person name="Larimer F."/>
            <person name="Land M."/>
            <person name="Hauser L."/>
            <person name="Kyrpides N."/>
            <person name="Kim E."/>
            <person name="Zhao J.-S.Z."/>
            <person name="Manno D."/>
            <person name="Hawari J."/>
            <person name="Richardson P."/>
        </authorList>
    </citation>
    <scope>NUCLEOTIDE SEQUENCE [LARGE SCALE GENOMIC DNA]</scope>
    <source>
        <strain>ATCC 700345 / ANG-SQ1</strain>
    </source>
</reference>
<organism>
    <name type="scientific">Shewanella pealeana (strain ATCC 700345 / ANG-SQ1)</name>
    <dbReference type="NCBI Taxonomy" id="398579"/>
    <lineage>
        <taxon>Bacteria</taxon>
        <taxon>Pseudomonadati</taxon>
        <taxon>Pseudomonadota</taxon>
        <taxon>Gammaproteobacteria</taxon>
        <taxon>Alteromonadales</taxon>
        <taxon>Shewanellaceae</taxon>
        <taxon>Shewanella</taxon>
    </lineage>
</organism>
<accession>A8H467</accession>
<evidence type="ECO:0000255" key="1">
    <source>
        <dbReference type="HAMAP-Rule" id="MF_00534"/>
    </source>
</evidence>
<protein>
    <recommendedName>
        <fullName evidence="1">Asparagine--tRNA ligase</fullName>
        <ecNumber evidence="1">6.1.1.22</ecNumber>
    </recommendedName>
    <alternativeName>
        <fullName evidence="1">Asparaginyl-tRNA synthetase</fullName>
        <shortName evidence="1">AsnRS</shortName>
    </alternativeName>
</protein>
<sequence>MSITSVASVFKGDFAIGSQITVRGWVRSRRDSKAGISFLAVYDGSCFDPIQGVVPNNLENYTNEVLKLTAGCSVVMTGEVVESPGQGQAFEMQVTKVEVAGLVEDPDTYPMAAKRHSIEHLRELAHLRPRTNIIGAVARVRNCLSQAIHRFYNEQGYIWVSTPLITASDTEGAGEMFRVSTLDLENLPRTDKGTVDYAEDFFGKESFLTVSGQLNAETYACALSKVYTFGPTFRAENSNTSRHLAEFWMVEPEVAFANLDDAAKLAEDMLKYCFKAVLEERRDDLEFFAQRVEKTAIERLENFVTSDFAQIDYTDAIEILKACDKDFEYDVEWGIDLHSEHERYLAEEHFKAPVVVKNYPKDIKAFYMRLNDDGKTVAAMDVLAPGIGEIIGGAQREERLDVLDARLAEMELSQEDYWWYRDLRRYGTVPHAGFGLGFERLVSYVTGVSNIRDVIPFPRSPKSANF</sequence>